<accession>P55723</accession>
<keyword id="KW-1003">Cell membrane</keyword>
<keyword id="KW-0472">Membrane</keyword>
<keyword id="KW-0614">Plasmid</keyword>
<keyword id="KW-1185">Reference proteome</keyword>
<keyword id="KW-0812">Transmembrane</keyword>
<keyword id="KW-1133">Transmembrane helix</keyword>
<keyword id="KW-0813">Transport</keyword>
<protein>
    <recommendedName>
        <fullName>Probable translocation protein y4yO</fullName>
    </recommendedName>
</protein>
<sequence length="345" mass="37762">MSDTSEEKSHGATPKKLSDARKRGQIPRSSDFVRAAATCAGLGYLWLRGSVIEDKCREALLLTDKLQNLPFNLAVRQALVLLVELTLATVGPLLSALFGAVILAALLANRGFVFSLEPMKPNFDKINPFQWLKRLGSARSAVEVGKTLFKVLVLGGTFSLFFLGLWKTMVYLPVCGMGCFGVVFTGAKQLIGIGAGALLIGGLIDLLLQRALFLREMRMTKTEIKRELKEQQGTPELKGERRRIRNEMASEPPLGVHRATLVYRGTAVLIGLRYVRGETGVPILVCRAEGEAASDMFREAQNLRLKIVDDHVLAHQLMSTTKLGTAIPMQYFEPIARALLAAGLA</sequence>
<organism>
    <name type="scientific">Sinorhizobium fredii (strain NBRC 101917 / NGR234)</name>
    <dbReference type="NCBI Taxonomy" id="394"/>
    <lineage>
        <taxon>Bacteria</taxon>
        <taxon>Pseudomonadati</taxon>
        <taxon>Pseudomonadota</taxon>
        <taxon>Alphaproteobacteria</taxon>
        <taxon>Hyphomicrobiales</taxon>
        <taxon>Rhizobiaceae</taxon>
        <taxon>Sinorhizobium/Ensifer group</taxon>
        <taxon>Sinorhizobium</taxon>
    </lineage>
</organism>
<dbReference type="EMBL" id="U00090">
    <property type="protein sequence ID" value="AAB91954.1"/>
    <property type="molecule type" value="Genomic_DNA"/>
</dbReference>
<dbReference type="RefSeq" id="NP_444167.1">
    <property type="nucleotide sequence ID" value="NC_000914.2"/>
</dbReference>
<dbReference type="RefSeq" id="WP_010875099.1">
    <property type="nucleotide sequence ID" value="NC_000914.2"/>
</dbReference>
<dbReference type="SMR" id="P55723"/>
<dbReference type="KEGG" id="rhi:NGR_a00580"/>
<dbReference type="PATRIC" id="fig|394.7.peg.56"/>
<dbReference type="eggNOG" id="COG4792">
    <property type="taxonomic scope" value="Bacteria"/>
</dbReference>
<dbReference type="HOGENOM" id="CLU_041013_1_3_5"/>
<dbReference type="OrthoDB" id="9807950at2"/>
<dbReference type="Proteomes" id="UP000001054">
    <property type="component" value="Plasmid pNGR234a"/>
</dbReference>
<dbReference type="GO" id="GO:0005886">
    <property type="term" value="C:plasma membrane"/>
    <property type="evidence" value="ECO:0007669"/>
    <property type="project" value="UniProtKB-SubCell"/>
</dbReference>
<dbReference type="GO" id="GO:0009306">
    <property type="term" value="P:protein secretion"/>
    <property type="evidence" value="ECO:0007669"/>
    <property type="project" value="InterPro"/>
</dbReference>
<dbReference type="Gene3D" id="3.40.1690.10">
    <property type="entry name" value="secretion proteins EscU"/>
    <property type="match status" value="1"/>
</dbReference>
<dbReference type="InterPro" id="IPR006135">
    <property type="entry name" value="T3SS_substrate_exporter"/>
</dbReference>
<dbReference type="InterPro" id="IPR029025">
    <property type="entry name" value="T3SS_substrate_exporter_C"/>
</dbReference>
<dbReference type="PANTHER" id="PTHR30531">
    <property type="entry name" value="FLAGELLAR BIOSYNTHETIC PROTEIN FLHB"/>
    <property type="match status" value="1"/>
</dbReference>
<dbReference type="PANTHER" id="PTHR30531:SF12">
    <property type="entry name" value="FLAGELLAR BIOSYNTHETIC PROTEIN FLHB"/>
    <property type="match status" value="1"/>
</dbReference>
<dbReference type="Pfam" id="PF01312">
    <property type="entry name" value="Bac_export_2"/>
    <property type="match status" value="1"/>
</dbReference>
<dbReference type="PRINTS" id="PR00950">
    <property type="entry name" value="TYPE3IMSPROT"/>
</dbReference>
<dbReference type="SUPFAM" id="SSF160544">
    <property type="entry name" value="EscU C-terminal domain-like"/>
    <property type="match status" value="1"/>
</dbReference>
<geneLocation type="plasmid">
    <name>sym pNGR234a</name>
</geneLocation>
<feature type="chain" id="PRO_0000180963" description="Probable translocation protein y4yO">
    <location>
        <begin position="1"/>
        <end position="345"/>
    </location>
</feature>
<feature type="transmembrane region" description="Helical" evidence="1">
    <location>
        <begin position="87"/>
        <end position="107"/>
    </location>
</feature>
<feature type="transmembrane region" description="Helical" evidence="1">
    <location>
        <begin position="151"/>
        <end position="171"/>
    </location>
</feature>
<feature type="transmembrane region" description="Helical" evidence="1">
    <location>
        <begin position="189"/>
        <end position="209"/>
    </location>
</feature>
<feature type="region of interest" description="Disordered" evidence="2">
    <location>
        <begin position="1"/>
        <end position="25"/>
    </location>
</feature>
<feature type="compositionally biased region" description="Basic and acidic residues" evidence="2">
    <location>
        <begin position="1"/>
        <end position="22"/>
    </location>
</feature>
<reference key="1">
    <citation type="journal article" date="1997" name="Nature">
        <title>Molecular basis of symbiosis between Rhizobium and legumes.</title>
        <authorList>
            <person name="Freiberg C.A."/>
            <person name="Fellay R."/>
            <person name="Bairoch A."/>
            <person name="Broughton W.J."/>
            <person name="Rosenthal A."/>
            <person name="Perret X."/>
        </authorList>
    </citation>
    <scope>NUCLEOTIDE SEQUENCE [LARGE SCALE GENOMIC DNA]</scope>
    <source>
        <strain>NBRC 101917 / NGR234</strain>
    </source>
</reference>
<reference key="2">
    <citation type="journal article" date="2009" name="Appl. Environ. Microbiol.">
        <title>Rhizobium sp. strain NGR234 possesses a remarkable number of secretion systems.</title>
        <authorList>
            <person name="Schmeisser C."/>
            <person name="Liesegang H."/>
            <person name="Krysciak D."/>
            <person name="Bakkou N."/>
            <person name="Le Quere A."/>
            <person name="Wollherr A."/>
            <person name="Heinemeyer I."/>
            <person name="Morgenstern B."/>
            <person name="Pommerening-Roeser A."/>
            <person name="Flores M."/>
            <person name="Palacios R."/>
            <person name="Brenner S."/>
            <person name="Gottschalk G."/>
            <person name="Schmitz R.A."/>
            <person name="Broughton W.J."/>
            <person name="Perret X."/>
            <person name="Strittmatter A.W."/>
            <person name="Streit W.R."/>
        </authorList>
    </citation>
    <scope>NUCLEOTIDE SEQUENCE [LARGE SCALE GENOMIC DNA]</scope>
    <source>
        <strain>NBRC 101917 / NGR234</strain>
    </source>
</reference>
<proteinExistence type="inferred from homology"/>
<comment type="function">
    <text>Could be involved in the secretion of an unknown factor.</text>
</comment>
<comment type="subcellular location">
    <subcellularLocation>
        <location evidence="3">Cell membrane</location>
        <topology evidence="3">Multi-pass membrane protein</topology>
    </subcellularLocation>
</comment>
<comment type="similarity">
    <text evidence="3">Belongs to the type III secretion exporter family.</text>
</comment>
<gene>
    <name type="ordered locus">NGR_a00580</name>
    <name type="ORF">y4yO</name>
</gene>
<name>Y4YO_SINFN</name>
<evidence type="ECO:0000255" key="1"/>
<evidence type="ECO:0000256" key="2">
    <source>
        <dbReference type="SAM" id="MobiDB-lite"/>
    </source>
</evidence>
<evidence type="ECO:0000305" key="3"/>